<accession>B4J4E7</accession>
<keyword id="KW-0175">Coiled coil</keyword>
<keyword id="KW-0963">Cytoplasm</keyword>
<keyword id="KW-0396">Initiation factor</keyword>
<keyword id="KW-0648">Protein biosynthesis</keyword>
<keyword id="KW-1185">Reference proteome</keyword>
<reference key="1">
    <citation type="journal article" date="2007" name="Nature">
        <title>Evolution of genes and genomes on the Drosophila phylogeny.</title>
        <authorList>
            <consortium name="Drosophila 12 genomes consortium"/>
        </authorList>
    </citation>
    <scope>NUCLEOTIDE SEQUENCE [LARGE SCALE GENOMIC DNA]</scope>
    <source>
        <strain>Tucson 15287-2541.00</strain>
    </source>
</reference>
<dbReference type="EMBL" id="CH916367">
    <property type="protein sequence ID" value="EDW01629.1"/>
    <property type="molecule type" value="Genomic_DNA"/>
</dbReference>
<dbReference type="SMR" id="B4J4E7"/>
<dbReference type="FunCoup" id="B4J4E7">
    <property type="interactions" value="1621"/>
</dbReference>
<dbReference type="STRING" id="7222.B4J4E7"/>
<dbReference type="EnsemblMetazoa" id="FBtr0155763">
    <property type="protein sequence ID" value="FBpp0154255"/>
    <property type="gene ID" value="FBgn0127813"/>
</dbReference>
<dbReference type="EnsemblMetazoa" id="XM_001986726.3">
    <property type="protein sequence ID" value="XP_001986762.1"/>
    <property type="gene ID" value="LOC6559136"/>
</dbReference>
<dbReference type="GeneID" id="6559136"/>
<dbReference type="KEGG" id="dgr:6559136"/>
<dbReference type="CTD" id="8669"/>
<dbReference type="eggNOG" id="KOG4813">
    <property type="taxonomic scope" value="Eukaryota"/>
</dbReference>
<dbReference type="HOGENOM" id="CLU_085806_2_0_1"/>
<dbReference type="InParanoid" id="B4J4E7"/>
<dbReference type="OMA" id="KPHYALW"/>
<dbReference type="OrthoDB" id="20381at2759"/>
<dbReference type="PhylomeDB" id="B4J4E7"/>
<dbReference type="ChiTaRS" id="Adam">
    <property type="organism name" value="fly"/>
</dbReference>
<dbReference type="Proteomes" id="UP000001070">
    <property type="component" value="Unassembled WGS sequence"/>
</dbReference>
<dbReference type="GO" id="GO:0016282">
    <property type="term" value="C:eukaryotic 43S preinitiation complex"/>
    <property type="evidence" value="ECO:0007669"/>
    <property type="project" value="UniProtKB-UniRule"/>
</dbReference>
<dbReference type="GO" id="GO:0033290">
    <property type="term" value="C:eukaryotic 48S preinitiation complex"/>
    <property type="evidence" value="ECO:0007669"/>
    <property type="project" value="UniProtKB-UniRule"/>
</dbReference>
<dbReference type="GO" id="GO:0005852">
    <property type="term" value="C:eukaryotic translation initiation factor 3 complex"/>
    <property type="evidence" value="ECO:0007669"/>
    <property type="project" value="UniProtKB-UniRule"/>
</dbReference>
<dbReference type="GO" id="GO:0003743">
    <property type="term" value="F:translation initiation factor activity"/>
    <property type="evidence" value="ECO:0007669"/>
    <property type="project" value="UniProtKB-UniRule"/>
</dbReference>
<dbReference type="GO" id="GO:0001732">
    <property type="term" value="P:formation of cytoplasmic translation initiation complex"/>
    <property type="evidence" value="ECO:0007669"/>
    <property type="project" value="UniProtKB-UniRule"/>
</dbReference>
<dbReference type="GO" id="GO:0006446">
    <property type="term" value="P:regulation of translational initiation"/>
    <property type="evidence" value="ECO:0007669"/>
    <property type="project" value="EnsemblMetazoa"/>
</dbReference>
<dbReference type="Gene3D" id="1.10.246.60">
    <property type="entry name" value="Eukaryotic translation initiation factor 3 like domains"/>
    <property type="match status" value="1"/>
</dbReference>
<dbReference type="HAMAP" id="MF_03009">
    <property type="entry name" value="eIF3j"/>
    <property type="match status" value="1"/>
</dbReference>
<dbReference type="InterPro" id="IPR023194">
    <property type="entry name" value="eIF3-like_dom_sf"/>
</dbReference>
<dbReference type="InterPro" id="IPR013906">
    <property type="entry name" value="eIF3j"/>
</dbReference>
<dbReference type="PANTHER" id="PTHR21681">
    <property type="entry name" value="EUKARYOTIC TRANSLATION INITIATION FACTOR 3 SUBUNIT J"/>
    <property type="match status" value="1"/>
</dbReference>
<dbReference type="PANTHER" id="PTHR21681:SF0">
    <property type="entry name" value="EUKARYOTIC TRANSLATION INITIATION FACTOR 3 SUBUNIT J"/>
    <property type="match status" value="1"/>
</dbReference>
<dbReference type="Pfam" id="PF08597">
    <property type="entry name" value="eIF3_subunit"/>
    <property type="match status" value="1"/>
</dbReference>
<name>EIF3J_DROGR</name>
<comment type="function">
    <text evidence="1">Component of the eukaryotic translation initiation factor 3 (eIF-3) complex, which is involved in protein synthesis of a specialized repertoire of mRNAs and, together with other initiation factors, stimulates binding of mRNA and methionyl-tRNAi to the 40S ribosome. The eIF-3 complex specifically targets and initiates translation of a subset of mRNAs involved in cell proliferation.</text>
</comment>
<comment type="subunit">
    <text evidence="1">Component of the eukaryotic translation initiation factor 3 (eIF-3) complex. The eIF-3 complex interacts with pix.</text>
</comment>
<comment type="subcellular location">
    <subcellularLocation>
        <location evidence="1">Cytoplasm</location>
    </subcellularLocation>
</comment>
<comment type="similarity">
    <text evidence="1">Belongs to the eIF-3 subunit J family.</text>
</comment>
<organism>
    <name type="scientific">Drosophila grimshawi</name>
    <name type="common">Hawaiian fruit fly</name>
    <name type="synonym">Idiomyia grimshawi</name>
    <dbReference type="NCBI Taxonomy" id="7222"/>
    <lineage>
        <taxon>Eukaryota</taxon>
        <taxon>Metazoa</taxon>
        <taxon>Ecdysozoa</taxon>
        <taxon>Arthropoda</taxon>
        <taxon>Hexapoda</taxon>
        <taxon>Insecta</taxon>
        <taxon>Pterygota</taxon>
        <taxon>Neoptera</taxon>
        <taxon>Endopterygota</taxon>
        <taxon>Diptera</taxon>
        <taxon>Brachycera</taxon>
        <taxon>Muscomorpha</taxon>
        <taxon>Ephydroidea</taxon>
        <taxon>Drosophilidae</taxon>
        <taxon>Drosophila</taxon>
        <taxon>Hawaiian Drosophila</taxon>
    </lineage>
</organism>
<protein>
    <recommendedName>
        <fullName evidence="1">Eukaryotic translation initiation factor 3 subunit J</fullName>
        <shortName evidence="1">eIF3j</shortName>
    </recommendedName>
</protein>
<feature type="chain" id="PRO_0000365134" description="Eukaryotic translation initiation factor 3 subunit J">
    <location>
        <begin position="1"/>
        <end position="237"/>
    </location>
</feature>
<feature type="region of interest" description="Disordered" evidence="2">
    <location>
        <begin position="20"/>
        <end position="64"/>
    </location>
</feature>
<feature type="coiled-coil region" evidence="1">
    <location>
        <begin position="63"/>
        <end position="115"/>
    </location>
</feature>
<feature type="compositionally biased region" description="Acidic residues" evidence="2">
    <location>
        <begin position="28"/>
        <end position="46"/>
    </location>
</feature>
<feature type="compositionally biased region" description="Basic and acidic residues" evidence="2">
    <location>
        <begin position="47"/>
        <end position="58"/>
    </location>
</feature>
<proteinExistence type="inferred from homology"/>
<gene>
    <name evidence="1" type="primary">eIF3j</name>
    <name evidence="1" type="synonym">Adam</name>
    <name type="ORF">GH20349</name>
</gene>
<evidence type="ECO:0000255" key="1">
    <source>
        <dbReference type="HAMAP-Rule" id="MF_03009"/>
    </source>
</evidence>
<evidence type="ECO:0000256" key="2">
    <source>
        <dbReference type="SAM" id="MobiDB-lite"/>
    </source>
</evidence>
<sequence length="237" mass="27082">MADDWEFAADSKVVVKPNAANNINKWEGEDDDEDVKESWEDEEEKKDEEKPTKTEAPAKTKPNKVLKAKLLEQECLEKEEEAKRLANMSTEEKLAEKLRLQKIQEESDLKSALETFGLTSIDGGLDSFNPQSNEEFKEFGATLSWKIAQYKESPHFPQFIEDLVQALCVNLSTADLKKVKMSVEVLHSEKLKMEKVSVKNKGAAKNRGKATLRTENDDIDVYQKYGDDFTDDYDDFM</sequence>